<gene>
    <name evidence="2" type="primary">tal</name>
    <name type="ordered locus">Bcenmc03_2358</name>
</gene>
<keyword id="KW-0963">Cytoplasm</keyword>
<keyword id="KW-0570">Pentose shunt</keyword>
<keyword id="KW-0704">Schiff base</keyword>
<keyword id="KW-0808">Transferase</keyword>
<reference key="1">
    <citation type="submission" date="2008-02" db="EMBL/GenBank/DDBJ databases">
        <title>Complete sequence of chromosome 1 of Burkholderia cenocepacia MC0-3.</title>
        <authorList>
            <person name="Copeland A."/>
            <person name="Lucas S."/>
            <person name="Lapidus A."/>
            <person name="Barry K."/>
            <person name="Bruce D."/>
            <person name="Goodwin L."/>
            <person name="Glavina del Rio T."/>
            <person name="Dalin E."/>
            <person name="Tice H."/>
            <person name="Pitluck S."/>
            <person name="Chain P."/>
            <person name="Malfatti S."/>
            <person name="Shin M."/>
            <person name="Vergez L."/>
            <person name="Schmutz J."/>
            <person name="Larimer F."/>
            <person name="Land M."/>
            <person name="Hauser L."/>
            <person name="Kyrpides N."/>
            <person name="Mikhailova N."/>
            <person name="Tiedje J."/>
            <person name="Richardson P."/>
        </authorList>
    </citation>
    <scope>NUCLEOTIDE SEQUENCE [LARGE SCALE GENOMIC DNA]</scope>
    <source>
        <strain>MC0-3</strain>
    </source>
</reference>
<organism>
    <name type="scientific">Burkholderia orbicola (strain MC0-3)</name>
    <dbReference type="NCBI Taxonomy" id="406425"/>
    <lineage>
        <taxon>Bacteria</taxon>
        <taxon>Pseudomonadati</taxon>
        <taxon>Pseudomonadota</taxon>
        <taxon>Betaproteobacteria</taxon>
        <taxon>Burkholderiales</taxon>
        <taxon>Burkholderiaceae</taxon>
        <taxon>Burkholderia</taxon>
        <taxon>Burkholderia cepacia complex</taxon>
        <taxon>Burkholderia orbicola</taxon>
    </lineage>
</organism>
<dbReference type="EC" id="2.2.1.2" evidence="2"/>
<dbReference type="EMBL" id="CP000958">
    <property type="protein sequence ID" value="ACA91519.1"/>
    <property type="molecule type" value="Genomic_DNA"/>
</dbReference>
<dbReference type="RefSeq" id="WP_012328950.1">
    <property type="nucleotide sequence ID" value="NC_010508.1"/>
</dbReference>
<dbReference type="SMR" id="B1JW82"/>
<dbReference type="GeneID" id="83049146"/>
<dbReference type="KEGG" id="bcm:Bcenmc03_2358"/>
<dbReference type="HOGENOM" id="CLU_047470_0_1_4"/>
<dbReference type="UniPathway" id="UPA00115">
    <property type="reaction ID" value="UER00414"/>
</dbReference>
<dbReference type="Proteomes" id="UP000002169">
    <property type="component" value="Chromosome 1"/>
</dbReference>
<dbReference type="GO" id="GO:0005737">
    <property type="term" value="C:cytoplasm"/>
    <property type="evidence" value="ECO:0007669"/>
    <property type="project" value="UniProtKB-SubCell"/>
</dbReference>
<dbReference type="GO" id="GO:0004801">
    <property type="term" value="F:transaldolase activity"/>
    <property type="evidence" value="ECO:0000250"/>
    <property type="project" value="UniProtKB"/>
</dbReference>
<dbReference type="GO" id="GO:0005975">
    <property type="term" value="P:carbohydrate metabolic process"/>
    <property type="evidence" value="ECO:0007669"/>
    <property type="project" value="InterPro"/>
</dbReference>
<dbReference type="GO" id="GO:0006098">
    <property type="term" value="P:pentose-phosphate shunt"/>
    <property type="evidence" value="ECO:0007669"/>
    <property type="project" value="UniProtKB-UniRule"/>
</dbReference>
<dbReference type="CDD" id="cd00957">
    <property type="entry name" value="Transaldolase_TalAB"/>
    <property type="match status" value="1"/>
</dbReference>
<dbReference type="FunFam" id="3.20.20.70:FF:000002">
    <property type="entry name" value="Transaldolase"/>
    <property type="match status" value="1"/>
</dbReference>
<dbReference type="Gene3D" id="3.20.20.70">
    <property type="entry name" value="Aldolase class I"/>
    <property type="match status" value="1"/>
</dbReference>
<dbReference type="HAMAP" id="MF_00492">
    <property type="entry name" value="Transaldolase_1"/>
    <property type="match status" value="1"/>
</dbReference>
<dbReference type="InterPro" id="IPR013785">
    <property type="entry name" value="Aldolase_TIM"/>
</dbReference>
<dbReference type="InterPro" id="IPR001585">
    <property type="entry name" value="TAL/FSA"/>
</dbReference>
<dbReference type="InterPro" id="IPR004730">
    <property type="entry name" value="Transaldolase_1"/>
</dbReference>
<dbReference type="InterPro" id="IPR018225">
    <property type="entry name" value="Transaldolase_AS"/>
</dbReference>
<dbReference type="NCBIfam" id="NF009001">
    <property type="entry name" value="PRK12346.1"/>
    <property type="match status" value="1"/>
</dbReference>
<dbReference type="NCBIfam" id="TIGR00874">
    <property type="entry name" value="talAB"/>
    <property type="match status" value="1"/>
</dbReference>
<dbReference type="PANTHER" id="PTHR10683">
    <property type="entry name" value="TRANSALDOLASE"/>
    <property type="match status" value="1"/>
</dbReference>
<dbReference type="PANTHER" id="PTHR10683:SF18">
    <property type="entry name" value="TRANSALDOLASE"/>
    <property type="match status" value="1"/>
</dbReference>
<dbReference type="Pfam" id="PF00923">
    <property type="entry name" value="TAL_FSA"/>
    <property type="match status" value="1"/>
</dbReference>
<dbReference type="SUPFAM" id="SSF51569">
    <property type="entry name" value="Aldolase"/>
    <property type="match status" value="1"/>
</dbReference>
<dbReference type="PROSITE" id="PS01054">
    <property type="entry name" value="TRANSALDOLASE_1"/>
    <property type="match status" value="1"/>
</dbReference>
<dbReference type="PROSITE" id="PS00958">
    <property type="entry name" value="TRANSALDOLASE_2"/>
    <property type="match status" value="1"/>
</dbReference>
<feature type="chain" id="PRO_1000126238" description="Transaldolase">
    <location>
        <begin position="1"/>
        <end position="317"/>
    </location>
</feature>
<feature type="active site" description="Schiff-base intermediate with substrate" evidence="2">
    <location>
        <position position="126"/>
    </location>
</feature>
<evidence type="ECO:0000250" key="1"/>
<evidence type="ECO:0000255" key="2">
    <source>
        <dbReference type="HAMAP-Rule" id="MF_00492"/>
    </source>
</evidence>
<sequence length="317" mass="35351">MTTALDQLKQYTTVVADTGDFQQLAQYKPQDATTNPSLILKAVQKDAYKPILEKTVRDHRNESTDFIIDRLLIAFGTEILKLIPGRVSTEVDARLSFDTQRSIDKGRELIKLYEAAGVGRERILIKLASTWEGIRAAEVLQKEGIKCNMTLLFSLVQAAACAEAGAQLISPFVGRIYDWYKKQAGAEWNEARDGGANDPGVQSVRRIYTYYKTFGYKTEVMGASFRTTSQITELAGCDLLTISPDLLQKLQESNETVARKLSPETLQDKPAERVAIDEASFRFQLNDEAMATEKLAEGIRVFAADAVKLEKLIDALR</sequence>
<protein>
    <recommendedName>
        <fullName evidence="2">Transaldolase</fullName>
        <ecNumber evidence="2">2.2.1.2</ecNumber>
    </recommendedName>
</protein>
<comment type="function">
    <text evidence="2">Transaldolase is important for the balance of metabolites in the pentose-phosphate pathway.</text>
</comment>
<comment type="catalytic activity">
    <reaction evidence="2">
        <text>D-sedoheptulose 7-phosphate + D-glyceraldehyde 3-phosphate = D-erythrose 4-phosphate + beta-D-fructose 6-phosphate</text>
        <dbReference type="Rhea" id="RHEA:17053"/>
        <dbReference type="ChEBI" id="CHEBI:16897"/>
        <dbReference type="ChEBI" id="CHEBI:57483"/>
        <dbReference type="ChEBI" id="CHEBI:57634"/>
        <dbReference type="ChEBI" id="CHEBI:59776"/>
        <dbReference type="EC" id="2.2.1.2"/>
    </reaction>
</comment>
<comment type="pathway">
    <text evidence="2">Carbohydrate degradation; pentose phosphate pathway; D-glyceraldehyde 3-phosphate and beta-D-fructose 6-phosphate from D-ribose 5-phosphate and D-xylulose 5-phosphate (non-oxidative stage): step 2/3.</text>
</comment>
<comment type="subunit">
    <text evidence="1">Homodimer.</text>
</comment>
<comment type="subcellular location">
    <subcellularLocation>
        <location evidence="2">Cytoplasm</location>
    </subcellularLocation>
</comment>
<comment type="similarity">
    <text evidence="2">Belongs to the transaldolase family. Type 1 subfamily.</text>
</comment>
<proteinExistence type="inferred from homology"/>
<name>TAL_BURO0</name>
<accession>B1JW82</accession>